<accession>Q0R5R4</accession>
<protein>
    <recommendedName>
        <fullName>Gag polyprotein</fullName>
    </recommendedName>
    <alternativeName>
        <fullName>Pr53Gag</fullName>
    </alternativeName>
    <component>
        <recommendedName>
            <fullName>Matrix protein p19</fullName>
            <shortName>MA</shortName>
        </recommendedName>
    </component>
    <component>
        <recommendedName>
            <fullName>Capsid protein p24</fullName>
            <shortName>CA</shortName>
        </recommendedName>
    </component>
    <component>
        <recommendedName>
            <fullName>Nucleocapsid protein p15-gag</fullName>
            <shortName>NC-gag</shortName>
        </recommendedName>
    </component>
</protein>
<feature type="initiator methionine" description="Removed; by host" evidence="1">
    <location>
        <position position="1"/>
    </location>
</feature>
<feature type="chain" id="PRO_0000259779" description="Matrix protein p19" evidence="1">
    <location>
        <begin position="2"/>
        <end position="123"/>
    </location>
</feature>
<feature type="chain" id="PRO_0000259780" description="Capsid protein p24" evidence="1">
    <location>
        <begin position="124"/>
        <end position="337"/>
    </location>
</feature>
<feature type="chain" id="PRO_0000259781" description="Nucleocapsid protein p15-gag" evidence="1">
    <location>
        <begin position="338"/>
        <end position="422"/>
    </location>
</feature>
<feature type="zinc finger region" description="CCHC-type 1" evidence="2">
    <location>
        <begin position="349"/>
        <end position="366"/>
    </location>
</feature>
<feature type="zinc finger region" description="CCHC-type 2" evidence="2">
    <location>
        <begin position="372"/>
        <end position="389"/>
    </location>
</feature>
<feature type="region of interest" description="Disordered" evidence="3">
    <location>
        <begin position="95"/>
        <end position="116"/>
    </location>
</feature>
<feature type="region of interest" description="Disordered" evidence="3">
    <location>
        <begin position="388"/>
        <end position="422"/>
    </location>
</feature>
<feature type="short sequence motif" description="PTAP/PSAP motif">
    <location>
        <begin position="98"/>
        <end position="101"/>
    </location>
</feature>
<feature type="short sequence motif" description="PPXY motif">
    <location>
        <begin position="109"/>
        <end position="112"/>
    </location>
</feature>
<feature type="compositionally biased region" description="Basic and acidic residues" evidence="3">
    <location>
        <begin position="388"/>
        <end position="398"/>
    </location>
</feature>
<feature type="site" description="Cleavage; by viral protease" evidence="1">
    <location>
        <begin position="123"/>
        <end position="124"/>
    </location>
</feature>
<feature type="site" description="Cleavage; by viral protease" evidence="1">
    <location>
        <begin position="337"/>
        <end position="338"/>
    </location>
</feature>
<feature type="lipid moiety-binding region" description="N-myristoyl glycine; by host" evidence="1">
    <location>
        <position position="2"/>
    </location>
</feature>
<evidence type="ECO:0000250" key="1"/>
<evidence type="ECO:0000255" key="2">
    <source>
        <dbReference type="PROSITE-ProRule" id="PRU00047"/>
    </source>
</evidence>
<evidence type="ECO:0000256" key="3">
    <source>
        <dbReference type="SAM" id="MobiDB-lite"/>
    </source>
</evidence>
<evidence type="ECO:0000305" key="4"/>
<name>GAG_HTL32</name>
<keyword id="KW-0167">Capsid protein</keyword>
<keyword id="KW-0945">Host-virus interaction</keyword>
<keyword id="KW-0449">Lipoprotein</keyword>
<keyword id="KW-0479">Metal-binding</keyword>
<keyword id="KW-0519">Myristate</keyword>
<keyword id="KW-0597">Phosphoprotein</keyword>
<keyword id="KW-1185">Reference proteome</keyword>
<keyword id="KW-0677">Repeat</keyword>
<keyword id="KW-0688">Ribosomal frameshifting</keyword>
<keyword id="KW-0543">Viral nucleoprotein</keyword>
<keyword id="KW-0946">Virion</keyword>
<keyword id="KW-0862">Zinc</keyword>
<keyword id="KW-0863">Zinc-finger</keyword>
<sequence length="422" mass="46935">MGKTYSSPINPIPKAPKGLAIHHWLNFLQAAYRLQPGPSEFDFHQLRKFLKLAIKTPVWLNPINYSVLAGLIPKNYPGRVHEIVAILIQETPAREAPPSAPLAEDPQKPPPYPEQAQEASQCLPILHPHGAPAAHRPWQMKDLQAIKQEVSSSAPGSPQFMQTIRLAVQQFDPTAKDLHDLLQYLCSSLVASLHHQQLETLIAQAETQGITGYNPLAGPLRIQANNPNQQGLRKEYQNLWLSAFSALPGNTKDPTWAAILQGPEEPFGSFVERLNVALDNGLPEGTPKDPILRSLAYSNANKECQKLLQARGQTNSPLGEMLRACQTWTPRDKNKILMVQPKKTPPPNQPCFRCGQVGHWSRDCKQPRPPPGPCPVCQDPTHWKRDCPQLKTDTRDSEDLLLDLPCEAPNVRERKNSSGGED</sequence>
<organismHost>
    <name type="scientific">Homo sapiens</name>
    <name type="common">Human</name>
    <dbReference type="NCBI Taxonomy" id="9606"/>
</organismHost>
<organism>
    <name type="scientific">Human T-cell leukemia virus 3 (strain 2026ND)</name>
    <name type="common">HTLV-3</name>
    <dbReference type="NCBI Taxonomy" id="402036"/>
    <lineage>
        <taxon>Viruses</taxon>
        <taxon>Riboviria</taxon>
        <taxon>Pararnavirae</taxon>
        <taxon>Artverviricota</taxon>
        <taxon>Revtraviricetes</taxon>
        <taxon>Ortervirales</taxon>
        <taxon>Retroviridae</taxon>
        <taxon>Orthoretrovirinae</taxon>
        <taxon>Deltaretrovirus</taxon>
        <taxon>Primate T-lymphotropic virus 3</taxon>
    </lineage>
</organism>
<reference key="1">
    <citation type="journal article" date="2006" name="J. Virol.">
        <title>Ancient origin and molecular features of the novel human T-lymphotropic virus type 3 revealed by complete genome analysis.</title>
        <authorList>
            <person name="Switzer W.M."/>
            <person name="Qari S.H."/>
            <person name="Wolfe N.D."/>
            <person name="Burke D.S."/>
            <person name="Folks T.M."/>
            <person name="Heneine W."/>
        </authorList>
    </citation>
    <scope>NUCLEOTIDE SEQUENCE [GENOMIC DNA]</scope>
</reference>
<comment type="function">
    <text evidence="1">Matrix protein p19 targets Gag, Gag-Pro and Gag-Pro-Pol polyproteins to the plasma membrane via a multipartite membrane binding signal, that includes its myristoylated N-terminus. Also mediates nuclear localization of the preintegration complex (By similarity).</text>
</comment>
<comment type="function">
    <text evidence="1">Capsid protein p24 forms the conical core of the virus that encapsulates the genomic RNA-nucleocapsid complex.</text>
</comment>
<comment type="function">
    <text evidence="1">Nucleocapsid protein p15 is involved in the packaging and encapsidation of two copies of the genome.</text>
</comment>
<comment type="subunit">
    <text evidence="1">Interacts with human TSG101. This interaction is essential for budding and release of viral particles (By similarity).</text>
</comment>
<comment type="subcellular location">
    <molecule>Matrix protein p19</molecule>
    <subcellularLocation>
        <location evidence="4">Virion</location>
    </subcellularLocation>
</comment>
<comment type="subcellular location">
    <molecule>Capsid protein p24</molecule>
    <subcellularLocation>
        <location evidence="4">Virion</location>
    </subcellularLocation>
</comment>
<comment type="subcellular location">
    <molecule>Nucleocapsid protein p15-gag</molecule>
    <subcellularLocation>
        <location evidence="4">Virion</location>
    </subcellularLocation>
</comment>
<comment type="alternative products">
    <event type="ribosomal frameshifting"/>
    <isoform>
        <id>Q0R5R4-1</id>
        <name>Gag polyprotein</name>
        <sequence type="displayed"/>
    </isoform>
    <isoform>
        <id>Q0R5R3-1</id>
        <name>Gag-Pro polyprotein</name>
        <sequence type="external"/>
    </isoform>
    <isoform>
        <id>Q0R5R2-1</id>
        <name>Gag-Pol polyprotein</name>
        <sequence type="external"/>
    </isoform>
    <text>This strategy of translation probably allows the virus to modulate the quantity of each viral protein.</text>
</comment>
<comment type="domain">
    <text evidence="1">Late-budding domains (L domains) are short sequence motifs essential for viral particle release. They can occur individually or in close proximity within structural proteins. They interacts with sorting cellular proteins of the multivesicular body (MVB) pathway. Most of these proteins are class E vacuolar protein sorting factors belonging to ESCRT-I, ESCRT-II or ESCRT-III complexes. Matrix protein p19 contains two L domains: a PTAP/PSAP motif which interacts with the UEV domain of TSG101, and a PPXY motif which binds to the WW domains of HECT (homologous to E6-AP C-terminus) E3 ubiquitin ligases (By similarity).</text>
</comment>
<comment type="PTM">
    <text evidence="1">Specific enzymatic cleavages by the viral protease yield mature proteins. The polyprotein is cleaved during and after budding, this process is termed maturation (By similarity).</text>
</comment>
<comment type="miscellaneous">
    <molecule>Isoform Gag polyprotein</molecule>
    <text>Produced by conventional translation.</text>
</comment>
<gene>
    <name type="primary">gag</name>
</gene>
<dbReference type="EMBL" id="DQ093792">
    <property type="protein sequence ID" value="AAZ77657.1"/>
    <property type="molecule type" value="Genomic_DNA"/>
</dbReference>
<dbReference type="SMR" id="Q0R5R4"/>
<dbReference type="Proteomes" id="UP000008029">
    <property type="component" value="Genome"/>
</dbReference>
<dbReference type="GO" id="GO:0019013">
    <property type="term" value="C:viral nucleocapsid"/>
    <property type="evidence" value="ECO:0007669"/>
    <property type="project" value="UniProtKB-KW"/>
</dbReference>
<dbReference type="GO" id="GO:0003676">
    <property type="term" value="F:nucleic acid binding"/>
    <property type="evidence" value="ECO:0007669"/>
    <property type="project" value="InterPro"/>
</dbReference>
<dbReference type="GO" id="GO:0005198">
    <property type="term" value="F:structural molecule activity"/>
    <property type="evidence" value="ECO:0007669"/>
    <property type="project" value="InterPro"/>
</dbReference>
<dbReference type="GO" id="GO:0008270">
    <property type="term" value="F:zinc ion binding"/>
    <property type="evidence" value="ECO:0007669"/>
    <property type="project" value="UniProtKB-KW"/>
</dbReference>
<dbReference type="GO" id="GO:0075523">
    <property type="term" value="P:viral translational frameshifting"/>
    <property type="evidence" value="ECO:0007669"/>
    <property type="project" value="UniProtKB-KW"/>
</dbReference>
<dbReference type="Gene3D" id="1.10.1200.30">
    <property type="match status" value="1"/>
</dbReference>
<dbReference type="Gene3D" id="1.10.375.10">
    <property type="entry name" value="Human Immunodeficiency Virus Type 1 Capsid Protein"/>
    <property type="match status" value="1"/>
</dbReference>
<dbReference type="Gene3D" id="4.10.60.10">
    <property type="entry name" value="Zinc finger, CCHC-type"/>
    <property type="match status" value="1"/>
</dbReference>
<dbReference type="InterPro" id="IPR003139">
    <property type="entry name" value="D_retro_matrix"/>
</dbReference>
<dbReference type="InterPro" id="IPR045345">
    <property type="entry name" value="Gag_p24_C"/>
</dbReference>
<dbReference type="InterPro" id="IPR050195">
    <property type="entry name" value="Primate_lentivir_Gag_pol-like"/>
</dbReference>
<dbReference type="InterPro" id="IPR008916">
    <property type="entry name" value="Retrov_capsid_C"/>
</dbReference>
<dbReference type="InterPro" id="IPR008919">
    <property type="entry name" value="Retrov_capsid_N"/>
</dbReference>
<dbReference type="InterPro" id="IPR010999">
    <property type="entry name" value="Retrovr_matrix"/>
</dbReference>
<dbReference type="InterPro" id="IPR001878">
    <property type="entry name" value="Znf_CCHC"/>
</dbReference>
<dbReference type="InterPro" id="IPR036875">
    <property type="entry name" value="Znf_CCHC_sf"/>
</dbReference>
<dbReference type="PANTHER" id="PTHR40389">
    <property type="entry name" value="ENDOGENOUS RETROVIRUS GROUP K MEMBER 24 GAG POLYPROTEIN-RELATED"/>
    <property type="match status" value="1"/>
</dbReference>
<dbReference type="PANTHER" id="PTHR40389:SF3">
    <property type="entry name" value="IGE-BINDING PROTEIN"/>
    <property type="match status" value="1"/>
</dbReference>
<dbReference type="Pfam" id="PF02228">
    <property type="entry name" value="Gag_p19"/>
    <property type="match status" value="1"/>
</dbReference>
<dbReference type="Pfam" id="PF00607">
    <property type="entry name" value="Gag_p24"/>
    <property type="match status" value="1"/>
</dbReference>
<dbReference type="Pfam" id="PF19317">
    <property type="entry name" value="Gag_p24_C"/>
    <property type="match status" value="1"/>
</dbReference>
<dbReference type="Pfam" id="PF00098">
    <property type="entry name" value="zf-CCHC"/>
    <property type="match status" value="1"/>
</dbReference>
<dbReference type="SMART" id="SM00343">
    <property type="entry name" value="ZnF_C2HC"/>
    <property type="match status" value="2"/>
</dbReference>
<dbReference type="SUPFAM" id="SSF47836">
    <property type="entry name" value="Retroviral matrix proteins"/>
    <property type="match status" value="1"/>
</dbReference>
<dbReference type="SUPFAM" id="SSF47353">
    <property type="entry name" value="Retrovirus capsid dimerization domain-like"/>
    <property type="match status" value="1"/>
</dbReference>
<dbReference type="SUPFAM" id="SSF47943">
    <property type="entry name" value="Retrovirus capsid protein, N-terminal core domain"/>
    <property type="match status" value="1"/>
</dbReference>
<dbReference type="SUPFAM" id="SSF57756">
    <property type="entry name" value="Retrovirus zinc finger-like domains"/>
    <property type="match status" value="1"/>
</dbReference>
<dbReference type="PROSITE" id="PS50158">
    <property type="entry name" value="ZF_CCHC"/>
    <property type="match status" value="1"/>
</dbReference>
<proteinExistence type="inferred from homology"/>